<name>RECA_PSEA6</name>
<keyword id="KW-0067">ATP-binding</keyword>
<keyword id="KW-0963">Cytoplasm</keyword>
<keyword id="KW-0227">DNA damage</keyword>
<keyword id="KW-0233">DNA recombination</keyword>
<keyword id="KW-0234">DNA repair</keyword>
<keyword id="KW-0238">DNA-binding</keyword>
<keyword id="KW-0547">Nucleotide-binding</keyword>
<keyword id="KW-0742">SOS response</keyword>
<accession>Q15QS3</accession>
<evidence type="ECO:0000255" key="1">
    <source>
        <dbReference type="HAMAP-Rule" id="MF_00268"/>
    </source>
</evidence>
<gene>
    <name evidence="1" type="primary">recA</name>
    <name type="ordered locus">Patl_3259</name>
</gene>
<feature type="chain" id="PRO_1000047967" description="Protein RecA">
    <location>
        <begin position="1"/>
        <end position="343"/>
    </location>
</feature>
<feature type="binding site" evidence="1">
    <location>
        <begin position="65"/>
        <end position="72"/>
    </location>
    <ligand>
        <name>ATP</name>
        <dbReference type="ChEBI" id="CHEBI:30616"/>
    </ligand>
</feature>
<protein>
    <recommendedName>
        <fullName evidence="1">Protein RecA</fullName>
    </recommendedName>
    <alternativeName>
        <fullName evidence="1">Recombinase A</fullName>
    </alternativeName>
</protein>
<comment type="function">
    <text evidence="1">Can catalyze the hydrolysis of ATP in the presence of single-stranded DNA, the ATP-dependent uptake of single-stranded DNA by duplex DNA, and the ATP-dependent hybridization of homologous single-stranded DNAs. It interacts with LexA causing its activation and leading to its autocatalytic cleavage.</text>
</comment>
<comment type="subcellular location">
    <subcellularLocation>
        <location evidence="1">Cytoplasm</location>
    </subcellularLocation>
</comment>
<comment type="similarity">
    <text evidence="1">Belongs to the RecA family.</text>
</comment>
<organism>
    <name type="scientific">Pseudoalteromonas atlantica (strain T6c / ATCC BAA-1087)</name>
    <dbReference type="NCBI Taxonomy" id="3042615"/>
    <lineage>
        <taxon>Bacteria</taxon>
        <taxon>Pseudomonadati</taxon>
        <taxon>Pseudomonadota</taxon>
        <taxon>Gammaproteobacteria</taxon>
        <taxon>Alteromonadales</taxon>
        <taxon>Alteromonadaceae</taxon>
        <taxon>Paraglaciecola</taxon>
    </lineage>
</organism>
<proteinExistence type="inferred from homology"/>
<reference key="1">
    <citation type="submission" date="2006-06" db="EMBL/GenBank/DDBJ databases">
        <title>Complete sequence of Pseudoalteromonas atlantica T6c.</title>
        <authorList>
            <consortium name="US DOE Joint Genome Institute"/>
            <person name="Copeland A."/>
            <person name="Lucas S."/>
            <person name="Lapidus A."/>
            <person name="Barry K."/>
            <person name="Detter J.C."/>
            <person name="Glavina del Rio T."/>
            <person name="Hammon N."/>
            <person name="Israni S."/>
            <person name="Dalin E."/>
            <person name="Tice H."/>
            <person name="Pitluck S."/>
            <person name="Saunders E."/>
            <person name="Brettin T."/>
            <person name="Bruce D."/>
            <person name="Han C."/>
            <person name="Tapia R."/>
            <person name="Gilna P."/>
            <person name="Schmutz J."/>
            <person name="Larimer F."/>
            <person name="Land M."/>
            <person name="Hauser L."/>
            <person name="Kyrpides N."/>
            <person name="Kim E."/>
            <person name="Karls A.C."/>
            <person name="Bartlett D."/>
            <person name="Higgins B.P."/>
            <person name="Richardson P."/>
        </authorList>
    </citation>
    <scope>NUCLEOTIDE SEQUENCE [LARGE SCALE GENOMIC DNA]</scope>
    <source>
        <strain>T6c / ATCC BAA-1087</strain>
    </source>
</reference>
<dbReference type="EMBL" id="CP000388">
    <property type="protein sequence ID" value="ABG41765.1"/>
    <property type="molecule type" value="Genomic_DNA"/>
</dbReference>
<dbReference type="RefSeq" id="WP_011575995.1">
    <property type="nucleotide sequence ID" value="NC_008228.1"/>
</dbReference>
<dbReference type="SMR" id="Q15QS3"/>
<dbReference type="STRING" id="342610.Patl_3259"/>
<dbReference type="KEGG" id="pat:Patl_3259"/>
<dbReference type="eggNOG" id="COG0468">
    <property type="taxonomic scope" value="Bacteria"/>
</dbReference>
<dbReference type="HOGENOM" id="CLU_040469_1_2_6"/>
<dbReference type="OrthoDB" id="9776733at2"/>
<dbReference type="Proteomes" id="UP000001981">
    <property type="component" value="Chromosome"/>
</dbReference>
<dbReference type="GO" id="GO:0005829">
    <property type="term" value="C:cytosol"/>
    <property type="evidence" value="ECO:0007669"/>
    <property type="project" value="TreeGrafter"/>
</dbReference>
<dbReference type="GO" id="GO:0005524">
    <property type="term" value="F:ATP binding"/>
    <property type="evidence" value="ECO:0007669"/>
    <property type="project" value="UniProtKB-UniRule"/>
</dbReference>
<dbReference type="GO" id="GO:0016887">
    <property type="term" value="F:ATP hydrolysis activity"/>
    <property type="evidence" value="ECO:0007669"/>
    <property type="project" value="InterPro"/>
</dbReference>
<dbReference type="GO" id="GO:0140664">
    <property type="term" value="F:ATP-dependent DNA damage sensor activity"/>
    <property type="evidence" value="ECO:0007669"/>
    <property type="project" value="InterPro"/>
</dbReference>
<dbReference type="GO" id="GO:0003684">
    <property type="term" value="F:damaged DNA binding"/>
    <property type="evidence" value="ECO:0007669"/>
    <property type="project" value="UniProtKB-UniRule"/>
</dbReference>
<dbReference type="GO" id="GO:0003697">
    <property type="term" value="F:single-stranded DNA binding"/>
    <property type="evidence" value="ECO:0007669"/>
    <property type="project" value="UniProtKB-UniRule"/>
</dbReference>
<dbReference type="GO" id="GO:0006310">
    <property type="term" value="P:DNA recombination"/>
    <property type="evidence" value="ECO:0007669"/>
    <property type="project" value="UniProtKB-UniRule"/>
</dbReference>
<dbReference type="GO" id="GO:0006281">
    <property type="term" value="P:DNA repair"/>
    <property type="evidence" value="ECO:0007669"/>
    <property type="project" value="UniProtKB-UniRule"/>
</dbReference>
<dbReference type="GO" id="GO:0009432">
    <property type="term" value="P:SOS response"/>
    <property type="evidence" value="ECO:0007669"/>
    <property type="project" value="UniProtKB-UniRule"/>
</dbReference>
<dbReference type="CDD" id="cd00983">
    <property type="entry name" value="RecA"/>
    <property type="match status" value="1"/>
</dbReference>
<dbReference type="FunFam" id="3.40.50.300:FF:000087">
    <property type="entry name" value="Recombinase RecA"/>
    <property type="match status" value="1"/>
</dbReference>
<dbReference type="Gene3D" id="3.40.50.300">
    <property type="entry name" value="P-loop containing nucleotide triphosphate hydrolases"/>
    <property type="match status" value="1"/>
</dbReference>
<dbReference type="HAMAP" id="MF_00268">
    <property type="entry name" value="RecA"/>
    <property type="match status" value="1"/>
</dbReference>
<dbReference type="InterPro" id="IPR003593">
    <property type="entry name" value="AAA+_ATPase"/>
</dbReference>
<dbReference type="InterPro" id="IPR013765">
    <property type="entry name" value="DNA_recomb/repair_RecA"/>
</dbReference>
<dbReference type="InterPro" id="IPR020584">
    <property type="entry name" value="DNA_recomb/repair_RecA_CS"/>
</dbReference>
<dbReference type="InterPro" id="IPR027417">
    <property type="entry name" value="P-loop_NTPase"/>
</dbReference>
<dbReference type="InterPro" id="IPR049261">
    <property type="entry name" value="RecA-like_C"/>
</dbReference>
<dbReference type="InterPro" id="IPR049428">
    <property type="entry name" value="RecA-like_N"/>
</dbReference>
<dbReference type="InterPro" id="IPR020588">
    <property type="entry name" value="RecA_ATP-bd"/>
</dbReference>
<dbReference type="InterPro" id="IPR023400">
    <property type="entry name" value="RecA_C_sf"/>
</dbReference>
<dbReference type="InterPro" id="IPR020587">
    <property type="entry name" value="RecA_monomer-monomer_interface"/>
</dbReference>
<dbReference type="NCBIfam" id="TIGR02012">
    <property type="entry name" value="tigrfam_recA"/>
    <property type="match status" value="1"/>
</dbReference>
<dbReference type="PANTHER" id="PTHR45900:SF1">
    <property type="entry name" value="MITOCHONDRIAL DNA REPAIR PROTEIN RECA HOMOLOG-RELATED"/>
    <property type="match status" value="1"/>
</dbReference>
<dbReference type="PANTHER" id="PTHR45900">
    <property type="entry name" value="RECA"/>
    <property type="match status" value="1"/>
</dbReference>
<dbReference type="Pfam" id="PF00154">
    <property type="entry name" value="RecA"/>
    <property type="match status" value="1"/>
</dbReference>
<dbReference type="Pfam" id="PF21096">
    <property type="entry name" value="RecA_C"/>
    <property type="match status" value="1"/>
</dbReference>
<dbReference type="PRINTS" id="PR00142">
    <property type="entry name" value="RECA"/>
</dbReference>
<dbReference type="SMART" id="SM00382">
    <property type="entry name" value="AAA"/>
    <property type="match status" value="1"/>
</dbReference>
<dbReference type="SUPFAM" id="SSF52540">
    <property type="entry name" value="P-loop containing nucleoside triphosphate hydrolases"/>
    <property type="match status" value="1"/>
</dbReference>
<dbReference type="SUPFAM" id="SSF54752">
    <property type="entry name" value="RecA protein, C-terminal domain"/>
    <property type="match status" value="1"/>
</dbReference>
<dbReference type="PROSITE" id="PS00321">
    <property type="entry name" value="RECA_1"/>
    <property type="match status" value="1"/>
</dbReference>
<dbReference type="PROSITE" id="PS50162">
    <property type="entry name" value="RECA_2"/>
    <property type="match status" value="1"/>
</dbReference>
<dbReference type="PROSITE" id="PS50163">
    <property type="entry name" value="RECA_3"/>
    <property type="match status" value="1"/>
</dbReference>
<sequence>MDDNKTRALTAALGQIEKQFGKGAIMRLGDNQAMDIEAISTGSLTIDIALGIGGLPCGRVVEIYGPESSGKTTLTLQAIAEAQKMGKTCAFVDAEHALDPIYAGKLGVNIDDLLVSQPDTGEQALEICDMLVRSGAVDVVVVDSVAALTPKAEIEGDMGDSHVGLQARLMSQALRKLTGNIKRSNTLVIFINQIRMKIGVMFGSPETTTGGNALKFYASVRLDIRRIGAIKDGDEVVGNETRVKVVKNKVAPPFKQAEFQIMYGQGICKEAELIDLGVKQKLVEKAGAWYSYNGERIGQGKANVVKYLKEHTEMSNDIEQKLRAELLLKKTVKAEEPAKADEE</sequence>